<comment type="function">
    <text>Asparagine-specific endopeptidase involved in the processing of vacuolar seed protein precursors into the mature forms.</text>
</comment>
<comment type="similarity">
    <text evidence="6">Belongs to the peptidase C13 family.</text>
</comment>
<sequence length="497" mass="55106">METHKSLLFFTNYVLFLVFTLSFLPIPGLLASRLNPFEPGILMPTEEAEPVQVDDDDQLGTRWAVLVAGSMGFGNYRHQADVCHAYQLLRKGGLKEENIIVFMYDDIAKNELNPRPGVIINHPQGEDVYAGVPKDYTGEHVTAKNLYAVLLGDKSAVQGGSGKVVDSKPNDRIFLYYSDHGGPGVLGMPNLPYLYAMDFIEVLKKKHAAGGYKKMVIYVEACESGSIFEGIMPKDVDIYVTTASNAQESSWGTYCPGMEPSPPPEFTTCLGDLYSVAWMEDSESHNLKKETVKQQYSSVKARTSNYNTYAAGSHVMQYGNQSIKADKLYLFQGFDPASVNFPPNNAHLNAPMEVVNQRDAELHFMWQLYKRSENGSEKKKEILQQIKDAIKHRSHLDSSMQLIGDLLFGPKKASAILKSVREPGSPLVDDWGCLKSMVRVFETCCGSLTQYGMKHMRTFANICNAGVSHTSMEEACNAACSGHDAGQWHPTNQGYSA</sequence>
<reference key="1">
    <citation type="journal article" date="1993" name="Plant Cell">
        <title>Molecular characterization of a vacuolar processing enzyme related to a putative cysteine proteinase of Schistosoma mansoni.</title>
        <authorList>
            <person name="Hara-Nishimura I."/>
            <person name="Takeuchi Y."/>
            <person name="Nishimura M."/>
        </authorList>
    </citation>
    <scope>NUCLEOTIDE SEQUENCE [MRNA]</scope>
</reference>
<reference key="2">
    <citation type="journal article" date="1991" name="FEBS Lett.">
        <title>A unique vacuolar processing enzyme responsible for conversion of several proprotein precursors into the mature forms.</title>
        <authorList>
            <person name="Hara-Nishimura I."/>
            <person name="Inoue K."/>
            <person name="Nishimura M."/>
        </authorList>
    </citation>
    <scope>CHARACTERIZATION</scope>
</reference>
<organism>
    <name type="scientific">Ricinus communis</name>
    <name type="common">Castor bean</name>
    <dbReference type="NCBI Taxonomy" id="3988"/>
    <lineage>
        <taxon>Eukaryota</taxon>
        <taxon>Viridiplantae</taxon>
        <taxon>Streptophyta</taxon>
        <taxon>Embryophyta</taxon>
        <taxon>Tracheophyta</taxon>
        <taxon>Spermatophyta</taxon>
        <taxon>Magnoliopsida</taxon>
        <taxon>eudicotyledons</taxon>
        <taxon>Gunneridae</taxon>
        <taxon>Pentapetalae</taxon>
        <taxon>rosids</taxon>
        <taxon>fabids</taxon>
        <taxon>Malpighiales</taxon>
        <taxon>Euphorbiaceae</taxon>
        <taxon>Acalyphoideae</taxon>
        <taxon>Acalypheae</taxon>
        <taxon>Ricinus</taxon>
    </lineage>
</organism>
<accession>P49042</accession>
<protein>
    <recommendedName>
        <fullName>Vacuolar-processing enzyme</fullName>
        <shortName>VPE</shortName>
        <ecNumber>3.4.22.-</ecNumber>
    </recommendedName>
</protein>
<feature type="signal peptide" evidence="4">
    <location>
        <begin position="1"/>
        <end position="31"/>
    </location>
</feature>
<feature type="chain" id="PRO_0000026523" description="Vacuolar-processing enzyme">
    <location>
        <begin position="32"/>
        <end position="497"/>
    </location>
</feature>
<feature type="active site" evidence="1">
    <location>
        <position position="180"/>
    </location>
</feature>
<feature type="active site" description="Nucleophile" evidence="1">
    <location>
        <position position="222"/>
    </location>
</feature>
<feature type="site" description="Required for post-translational maturation and enzyme activity" evidence="3">
    <location>
        <position position="269"/>
    </location>
</feature>
<feature type="glycosylation site" description="N-linked (GlcNAc...) asparagine" evidence="5">
    <location>
        <position position="320"/>
    </location>
</feature>
<feature type="glycosylation site" description="N-linked (GlcNAc...) asparagine" evidence="5">
    <location>
        <position position="374"/>
    </location>
</feature>
<feature type="disulfide bond" evidence="2">
    <location>
        <begin position="255"/>
        <end position="269"/>
    </location>
</feature>
<feature type="disulfide bond" evidence="2">
    <location>
        <begin position="433"/>
        <end position="463"/>
    </location>
</feature>
<feature type="disulfide bond" evidence="2">
    <location>
        <begin position="445"/>
        <end position="480"/>
    </location>
</feature>
<name>VPE_RICCO</name>
<keyword id="KW-1015">Disulfide bond</keyword>
<keyword id="KW-0325">Glycoprotein</keyword>
<keyword id="KW-0378">Hydrolase</keyword>
<keyword id="KW-0645">Protease</keyword>
<keyword id="KW-0732">Signal</keyword>
<keyword id="KW-0788">Thiol protease</keyword>
<evidence type="ECO:0000250" key="1">
    <source>
        <dbReference type="UniProtKB" id="O89017"/>
    </source>
</evidence>
<evidence type="ECO:0000250" key="2">
    <source>
        <dbReference type="UniProtKB" id="P49046"/>
    </source>
</evidence>
<evidence type="ECO:0000250" key="3">
    <source>
        <dbReference type="UniProtKB" id="Q84LM2"/>
    </source>
</evidence>
<evidence type="ECO:0000255" key="4"/>
<evidence type="ECO:0000255" key="5">
    <source>
        <dbReference type="PROSITE-ProRule" id="PRU00498"/>
    </source>
</evidence>
<evidence type="ECO:0000305" key="6"/>
<proteinExistence type="evidence at protein level"/>
<dbReference type="EC" id="3.4.22.-"/>
<dbReference type="EMBL" id="D17401">
    <property type="protein sequence ID" value="BAA04225.1"/>
    <property type="molecule type" value="mRNA"/>
</dbReference>
<dbReference type="PIR" id="JQ2387">
    <property type="entry name" value="JQ2387"/>
</dbReference>
<dbReference type="RefSeq" id="NP_001310660.1">
    <property type="nucleotide sequence ID" value="NM_001323731.1"/>
</dbReference>
<dbReference type="SMR" id="P49042"/>
<dbReference type="MEROPS" id="C13.001"/>
<dbReference type="GeneID" id="8272115"/>
<dbReference type="KEGG" id="rcu:8272115"/>
<dbReference type="eggNOG" id="KOG1348">
    <property type="taxonomic scope" value="Eukaryota"/>
</dbReference>
<dbReference type="OMA" id="DYTGAHV"/>
<dbReference type="OrthoDB" id="192611at2759"/>
<dbReference type="GO" id="GO:0004197">
    <property type="term" value="F:cysteine-type endopeptidase activity"/>
    <property type="evidence" value="ECO:0007669"/>
    <property type="project" value="InterPro"/>
</dbReference>
<dbReference type="GO" id="GO:0051603">
    <property type="term" value="P:proteolysis involved in protein catabolic process"/>
    <property type="evidence" value="ECO:0007669"/>
    <property type="project" value="InterPro"/>
</dbReference>
<dbReference type="CDD" id="cd21115">
    <property type="entry name" value="legumain_C"/>
    <property type="match status" value="1"/>
</dbReference>
<dbReference type="FunFam" id="1.10.132.130:FF:000001">
    <property type="entry name" value="Vacuolar-processing enzyme beta-isozyme"/>
    <property type="match status" value="1"/>
</dbReference>
<dbReference type="FunFam" id="3.40.50.1460:FF:000005">
    <property type="entry name" value="Vacuolar-processing enzyme beta-isozyme"/>
    <property type="match status" value="1"/>
</dbReference>
<dbReference type="Gene3D" id="1.10.132.130">
    <property type="match status" value="1"/>
</dbReference>
<dbReference type="Gene3D" id="3.40.50.1460">
    <property type="match status" value="1"/>
</dbReference>
<dbReference type="InterPro" id="IPR043577">
    <property type="entry name" value="AE"/>
</dbReference>
<dbReference type="InterPro" id="IPR048501">
    <property type="entry name" value="Legum_prodom"/>
</dbReference>
<dbReference type="InterPro" id="IPR046427">
    <property type="entry name" value="Legumain_prodom_sf"/>
</dbReference>
<dbReference type="InterPro" id="IPR001096">
    <property type="entry name" value="Peptidase_C13"/>
</dbReference>
<dbReference type="PANTHER" id="PTHR12000">
    <property type="entry name" value="HEMOGLOBINASE FAMILY MEMBER"/>
    <property type="match status" value="1"/>
</dbReference>
<dbReference type="PANTHER" id="PTHR12000:SF42">
    <property type="entry name" value="LEGUMAIN"/>
    <property type="match status" value="1"/>
</dbReference>
<dbReference type="Pfam" id="PF20985">
    <property type="entry name" value="Legum_prodom"/>
    <property type="match status" value="1"/>
</dbReference>
<dbReference type="Pfam" id="PF01650">
    <property type="entry name" value="Peptidase_C13"/>
    <property type="match status" value="1"/>
</dbReference>
<dbReference type="PIRSF" id="PIRSF500139">
    <property type="entry name" value="AE"/>
    <property type="match status" value="1"/>
</dbReference>
<dbReference type="PIRSF" id="PIRSF019663">
    <property type="entry name" value="Legumain"/>
    <property type="match status" value="1"/>
</dbReference>
<dbReference type="PRINTS" id="PR00776">
    <property type="entry name" value="HEMOGLOBNASE"/>
</dbReference>